<organism>
    <name type="scientific">Streptococcus pneumoniae (strain P1031)</name>
    <dbReference type="NCBI Taxonomy" id="488223"/>
    <lineage>
        <taxon>Bacteria</taxon>
        <taxon>Bacillati</taxon>
        <taxon>Bacillota</taxon>
        <taxon>Bacilli</taxon>
        <taxon>Lactobacillales</taxon>
        <taxon>Streptococcaceae</taxon>
        <taxon>Streptococcus</taxon>
    </lineage>
</organism>
<feature type="chain" id="PRO_1000135170" description="ATP-dependent Clp protease proteolytic subunit">
    <location>
        <begin position="1"/>
        <end position="196"/>
    </location>
</feature>
<feature type="active site" description="Nucleophile" evidence="1">
    <location>
        <position position="96"/>
    </location>
</feature>
<feature type="active site" evidence="1">
    <location>
        <position position="121"/>
    </location>
</feature>
<keyword id="KW-0963">Cytoplasm</keyword>
<keyword id="KW-0378">Hydrolase</keyword>
<keyword id="KW-0645">Protease</keyword>
<keyword id="KW-0720">Serine protease</keyword>
<gene>
    <name evidence="1" type="primary">clpP</name>
    <name type="ordered locus">SPP_0757</name>
</gene>
<name>CLPP_STRZP</name>
<proteinExistence type="inferred from homology"/>
<reference key="1">
    <citation type="journal article" date="2010" name="Genome Biol.">
        <title>Structure and dynamics of the pan-genome of Streptococcus pneumoniae and closely related species.</title>
        <authorList>
            <person name="Donati C."/>
            <person name="Hiller N.L."/>
            <person name="Tettelin H."/>
            <person name="Muzzi A."/>
            <person name="Croucher N.J."/>
            <person name="Angiuoli S.V."/>
            <person name="Oggioni M."/>
            <person name="Dunning Hotopp J.C."/>
            <person name="Hu F.Z."/>
            <person name="Riley D.R."/>
            <person name="Covacci A."/>
            <person name="Mitchell T.J."/>
            <person name="Bentley S.D."/>
            <person name="Kilian M."/>
            <person name="Ehrlich G.D."/>
            <person name="Rappuoli R."/>
            <person name="Moxon E.R."/>
            <person name="Masignani V."/>
        </authorList>
    </citation>
    <scope>NUCLEOTIDE SEQUENCE [LARGE SCALE GENOMIC DNA]</scope>
    <source>
        <strain>P1031</strain>
    </source>
</reference>
<accession>C1CJJ5</accession>
<comment type="function">
    <text evidence="1">Cleaves peptides in various proteins in a process that requires ATP hydrolysis. Has a chymotrypsin-like activity. Plays a major role in the degradation of misfolded proteins.</text>
</comment>
<comment type="catalytic activity">
    <reaction evidence="1">
        <text>Hydrolysis of proteins to small peptides in the presence of ATP and magnesium. alpha-casein is the usual test substrate. In the absence of ATP, only oligopeptides shorter than five residues are hydrolyzed (such as succinyl-Leu-Tyr-|-NHMec, and Leu-Tyr-Leu-|-Tyr-Trp, in which cleavage of the -Tyr-|-Leu- and -Tyr-|-Trp bonds also occurs).</text>
        <dbReference type="EC" id="3.4.21.92"/>
    </reaction>
</comment>
<comment type="subunit">
    <text evidence="1">Fourteen ClpP subunits assemble into 2 heptameric rings which stack back to back to give a disk-like structure with a central cavity, resembling the structure of eukaryotic proteasomes.</text>
</comment>
<comment type="subcellular location">
    <subcellularLocation>
        <location evidence="1">Cytoplasm</location>
    </subcellularLocation>
</comment>
<comment type="similarity">
    <text evidence="1">Belongs to the peptidase S14 family.</text>
</comment>
<sequence length="196" mass="21367">MIPVVIEQTSRGERSYDIYSRLLKDRIIMLTGPVEDNMANSVIAQLLFLDAQDSTKDIYLYVNTPGGSVSAGLAIVDTMNFIKADVQTIVMGMAASMGTVIASSGAKGKRFMLPNAEYMIHQPMGGTGGGTQQTDMAIAAEHLLKTRNTLEKILAENSGQSMEKVHADAERDNWMSAHETLEYGFIDEIMANNSLN</sequence>
<evidence type="ECO:0000255" key="1">
    <source>
        <dbReference type="HAMAP-Rule" id="MF_00444"/>
    </source>
</evidence>
<protein>
    <recommendedName>
        <fullName evidence="1">ATP-dependent Clp protease proteolytic subunit</fullName>
        <ecNumber evidence="1">3.4.21.92</ecNumber>
    </recommendedName>
    <alternativeName>
        <fullName evidence="1">Endopeptidase Clp</fullName>
    </alternativeName>
</protein>
<dbReference type="EC" id="3.4.21.92" evidence="1"/>
<dbReference type="EMBL" id="CP000920">
    <property type="protein sequence ID" value="ACO20312.1"/>
    <property type="molecule type" value="Genomic_DNA"/>
</dbReference>
<dbReference type="RefSeq" id="WP_000613476.1">
    <property type="nucleotide sequence ID" value="NC_012467.1"/>
</dbReference>
<dbReference type="SMR" id="C1CJJ5"/>
<dbReference type="MEROPS" id="S14.001"/>
<dbReference type="KEGG" id="spp:SPP_0757"/>
<dbReference type="HOGENOM" id="CLU_058707_3_2_9"/>
<dbReference type="GO" id="GO:0005737">
    <property type="term" value="C:cytoplasm"/>
    <property type="evidence" value="ECO:0007669"/>
    <property type="project" value="UniProtKB-SubCell"/>
</dbReference>
<dbReference type="GO" id="GO:0009368">
    <property type="term" value="C:endopeptidase Clp complex"/>
    <property type="evidence" value="ECO:0007669"/>
    <property type="project" value="TreeGrafter"/>
</dbReference>
<dbReference type="GO" id="GO:0004176">
    <property type="term" value="F:ATP-dependent peptidase activity"/>
    <property type="evidence" value="ECO:0007669"/>
    <property type="project" value="InterPro"/>
</dbReference>
<dbReference type="GO" id="GO:0051117">
    <property type="term" value="F:ATPase binding"/>
    <property type="evidence" value="ECO:0007669"/>
    <property type="project" value="TreeGrafter"/>
</dbReference>
<dbReference type="GO" id="GO:0004252">
    <property type="term" value="F:serine-type endopeptidase activity"/>
    <property type="evidence" value="ECO:0007669"/>
    <property type="project" value="UniProtKB-UniRule"/>
</dbReference>
<dbReference type="GO" id="GO:0006515">
    <property type="term" value="P:protein quality control for misfolded or incompletely synthesized proteins"/>
    <property type="evidence" value="ECO:0007669"/>
    <property type="project" value="TreeGrafter"/>
</dbReference>
<dbReference type="CDD" id="cd07017">
    <property type="entry name" value="S14_ClpP_2"/>
    <property type="match status" value="1"/>
</dbReference>
<dbReference type="FunFam" id="3.90.226.10:FF:000014">
    <property type="entry name" value="ATP-dependent Clp protease proteolytic subunit"/>
    <property type="match status" value="1"/>
</dbReference>
<dbReference type="Gene3D" id="3.90.226.10">
    <property type="entry name" value="2-enoyl-CoA Hydratase, Chain A, domain 1"/>
    <property type="match status" value="1"/>
</dbReference>
<dbReference type="HAMAP" id="MF_00444">
    <property type="entry name" value="ClpP"/>
    <property type="match status" value="1"/>
</dbReference>
<dbReference type="InterPro" id="IPR001907">
    <property type="entry name" value="ClpP"/>
</dbReference>
<dbReference type="InterPro" id="IPR029045">
    <property type="entry name" value="ClpP/crotonase-like_dom_sf"/>
</dbReference>
<dbReference type="InterPro" id="IPR023562">
    <property type="entry name" value="ClpP/TepA"/>
</dbReference>
<dbReference type="InterPro" id="IPR033135">
    <property type="entry name" value="ClpP_His_AS"/>
</dbReference>
<dbReference type="InterPro" id="IPR018215">
    <property type="entry name" value="ClpP_Ser_AS"/>
</dbReference>
<dbReference type="NCBIfam" id="NF001368">
    <property type="entry name" value="PRK00277.1"/>
    <property type="match status" value="1"/>
</dbReference>
<dbReference type="NCBIfam" id="NF009205">
    <property type="entry name" value="PRK12553.1"/>
    <property type="match status" value="1"/>
</dbReference>
<dbReference type="PANTHER" id="PTHR10381">
    <property type="entry name" value="ATP-DEPENDENT CLP PROTEASE PROTEOLYTIC SUBUNIT"/>
    <property type="match status" value="1"/>
</dbReference>
<dbReference type="PANTHER" id="PTHR10381:SF70">
    <property type="entry name" value="ATP-DEPENDENT CLP PROTEASE PROTEOLYTIC SUBUNIT"/>
    <property type="match status" value="1"/>
</dbReference>
<dbReference type="Pfam" id="PF00574">
    <property type="entry name" value="CLP_protease"/>
    <property type="match status" value="1"/>
</dbReference>
<dbReference type="PRINTS" id="PR00127">
    <property type="entry name" value="CLPPROTEASEP"/>
</dbReference>
<dbReference type="SUPFAM" id="SSF52096">
    <property type="entry name" value="ClpP/crotonase"/>
    <property type="match status" value="1"/>
</dbReference>
<dbReference type="PROSITE" id="PS00382">
    <property type="entry name" value="CLP_PROTEASE_HIS"/>
    <property type="match status" value="1"/>
</dbReference>
<dbReference type="PROSITE" id="PS00381">
    <property type="entry name" value="CLP_PROTEASE_SER"/>
    <property type="match status" value="1"/>
</dbReference>